<proteinExistence type="inferred from homology"/>
<dbReference type="EMBL" id="CM003146">
    <property type="protein sequence ID" value="KIS68965.1"/>
    <property type="molecule type" value="Genomic_DNA"/>
</dbReference>
<dbReference type="RefSeq" id="XP_011389352.1">
    <property type="nucleotide sequence ID" value="XM_011391050.1"/>
</dbReference>
<dbReference type="STRING" id="237631.Q4PAB8"/>
<dbReference type="EnsemblFungi" id="KIS68965">
    <property type="protein sequence ID" value="KIS68965"/>
    <property type="gene ID" value="UMAG_02945"/>
</dbReference>
<dbReference type="GeneID" id="23563562"/>
<dbReference type="KEGG" id="uma:UMAG_02945"/>
<dbReference type="VEuPathDB" id="FungiDB:UMAG_02945"/>
<dbReference type="eggNOG" id="ENOG502S7J1">
    <property type="taxonomic scope" value="Eukaryota"/>
</dbReference>
<dbReference type="HOGENOM" id="CLU_271915_0_0_1"/>
<dbReference type="InParanoid" id="Q4PAB8"/>
<dbReference type="OMA" id="ARWCKAL"/>
<dbReference type="OrthoDB" id="5549158at2759"/>
<dbReference type="Proteomes" id="UP000000561">
    <property type="component" value="Chromosome 7"/>
</dbReference>
<dbReference type="GO" id="GO:0016592">
    <property type="term" value="C:mediator complex"/>
    <property type="evidence" value="ECO:0000318"/>
    <property type="project" value="GO_Central"/>
</dbReference>
<dbReference type="GO" id="GO:0003712">
    <property type="term" value="F:transcription coregulator activity"/>
    <property type="evidence" value="ECO:0007669"/>
    <property type="project" value="InterPro"/>
</dbReference>
<dbReference type="GO" id="GO:0006357">
    <property type="term" value="P:regulation of transcription by RNA polymerase II"/>
    <property type="evidence" value="ECO:0000318"/>
    <property type="project" value="GO_Central"/>
</dbReference>
<dbReference type="InterPro" id="IPR014801">
    <property type="entry name" value="Mediator_Med5_fun"/>
</dbReference>
<dbReference type="PANTHER" id="PTHR35784">
    <property type="entry name" value="MEDIATOR OF RNA POLYMERASE II TRANSCRIPTION SUBUNIT 5"/>
    <property type="match status" value="1"/>
</dbReference>
<dbReference type="PANTHER" id="PTHR35784:SF1">
    <property type="entry name" value="MEDIATOR OF RNA POLYMERASE II TRANSCRIPTION SUBUNIT 5"/>
    <property type="match status" value="1"/>
</dbReference>
<dbReference type="Pfam" id="PF08689">
    <property type="entry name" value="Med5"/>
    <property type="match status" value="1"/>
</dbReference>
<feature type="chain" id="PRO_0000302785" description="Mediator of RNA polymerase II transcription subunit 5">
    <location>
        <begin position="1"/>
        <end position="1237"/>
    </location>
</feature>
<feature type="region of interest" description="Disordered" evidence="2">
    <location>
        <begin position="1109"/>
        <end position="1131"/>
    </location>
</feature>
<feature type="region of interest" description="Disordered" evidence="2">
    <location>
        <begin position="1202"/>
        <end position="1226"/>
    </location>
</feature>
<feature type="compositionally biased region" description="Low complexity" evidence="2">
    <location>
        <begin position="1119"/>
        <end position="1131"/>
    </location>
</feature>
<name>MED5_MYCMD</name>
<keyword id="KW-0010">Activator</keyword>
<keyword id="KW-0539">Nucleus</keyword>
<keyword id="KW-1185">Reference proteome</keyword>
<keyword id="KW-0804">Transcription</keyword>
<keyword id="KW-0805">Transcription regulation</keyword>
<gene>
    <name type="primary">NUT1</name>
    <name type="synonym">MED5</name>
    <name type="ORF">UMAG_02945</name>
</gene>
<organism>
    <name type="scientific">Mycosarcoma maydis</name>
    <name type="common">Corn smut fungus</name>
    <name type="synonym">Ustilago maydis</name>
    <dbReference type="NCBI Taxonomy" id="5270"/>
    <lineage>
        <taxon>Eukaryota</taxon>
        <taxon>Fungi</taxon>
        <taxon>Dikarya</taxon>
        <taxon>Basidiomycota</taxon>
        <taxon>Ustilaginomycotina</taxon>
        <taxon>Ustilaginomycetes</taxon>
        <taxon>Ustilaginales</taxon>
        <taxon>Ustilaginaceae</taxon>
        <taxon>Mycosarcoma</taxon>
    </lineage>
</organism>
<evidence type="ECO:0000250" key="1"/>
<evidence type="ECO:0000256" key="2">
    <source>
        <dbReference type="SAM" id="MobiDB-lite"/>
    </source>
</evidence>
<evidence type="ECO:0000305" key="3"/>
<sequence length="1237" mass="132756">MSTGEAQQLIQKLLLEALARRLAQPKWLSLLHQLVRRIEAAQDDDGTFDVIPSLEGSHAAECLVKYLLSQSFIDPLLIEYLQALIYGSANRSGVSPDQGPITDVMTVTLHLLANVQAAASNVPAIEIISSVIGQGLLMTFQAPVPFRVSSPSFLALLQRLFADPTYEQDQTPSFPVDHVDTGASDIKVAPASLGFVVANLRLLALAADPAIASPQNLLAPRVSITVLINVGQGLLAYVTQILSAAQTAKNDKLKPDGAILQQLRSMASTSLTEIEAVLRSMNPAWKDEIALLRSLTSQIGVIDQISESFAEANTSKLSTRPTKRKLETLQDAQQRATWDHFLDVSTIAASEKPAVEPETALLMHLLVDHHTSWDFKLDAIKTLFLARRSAAAPSLTLEKSLTAFYFELLVAAIDACAAVVEMPPAFKGAEVYATIWRNALCGMIPELVLQLEQWLDGNQELPLRGQRLEAPHVRLEAALRAALLVMSDRLNVCESATNQSHAHGNVAATNGEEAAGAHANMMSDVLGLGTPPSQPIRAWLLRACIEHSLARPEAIADEFANGHKLASEVQSLTQSLRMDAQLEGLALNTLFETRIPTDHPVELLQRVASDPGTHFIFARQLVLQVQGWLEQHDLESIARWCKALTENACEGGAMLDTIMIYIDPAQMLDPLASILDHQDLGQTSDEPSTLSDILLFVQLLCYRYSTPITRISRYTVSNHDMDTVDSSAPLHRSMPPFLATHLATSSVSYPLSVLSEEDRGLVSRWIHALFGNEGISDDLISASPPTTLLRLSPLLFSQSISACQHGIIDLETLRGGLSYFLQDLLSFALPGALVWLLSEISRTPLQPILDFLSESGLQASVVDVPSSDGTLANGLPRNATSKSVCLEVLALLVDTDACPSSVRQLIAKAFDAFVSTIEADVTAAPQLAVGCETFNLASLKARMEGAGVTARLLSETGASWLQSVAAGHQDSRSKLFSMLTTLQPSVHAMDRLIGALKSGQVGRNGRDQKGLAAWLCFIAPASEPTSALRFVQRLELGDIEESAIEGVVRIVGLVVGLIMAAEAQRATTDAVADDLLALARAADTNARGTKATVADTTAAARPAEADLFDDEPCSPQPPHAAANATSHTSNAAPTVTSAASLLASGELRTTSKQVLDMMALKLVRFRSHMLGEKNAKSTTISAKWATLQSAIADHLAGGEAWHGAQQCRERTQNDAPVNGGKDADSGSGLSAWLSAMS</sequence>
<protein>
    <recommendedName>
        <fullName>Mediator of RNA polymerase II transcription subunit 5</fullName>
    </recommendedName>
    <alternativeName>
        <fullName>Mediator complex subunit 5</fullName>
    </alternativeName>
</protein>
<comment type="function">
    <text evidence="1">Component of the Mediator complex, a coactivator involved in the regulated transcription of nearly all RNA polymerase II-dependent genes. Mediator functions as a bridge to convey information from gene-specific regulatory proteins to the basal RNA polymerase II transcription machinery. Mediator is recruited to promoters by direct interactions with regulatory proteins and serves as a scaffold for the assembly of a functional preinitiation complex with RNA polymerase II and the general transcription factors (By similarity).</text>
</comment>
<comment type="subunit">
    <text evidence="1">Component of the Mediator complex.</text>
</comment>
<comment type="subcellular location">
    <subcellularLocation>
        <location evidence="1">Nucleus</location>
    </subcellularLocation>
</comment>
<comment type="similarity">
    <text evidence="3">Belongs to the Mediator complex subunit 5 family.</text>
</comment>
<reference key="1">
    <citation type="journal article" date="2006" name="Nature">
        <title>Insights from the genome of the biotrophic fungal plant pathogen Ustilago maydis.</title>
        <authorList>
            <person name="Kaemper J."/>
            <person name="Kahmann R."/>
            <person name="Boelker M."/>
            <person name="Ma L.-J."/>
            <person name="Brefort T."/>
            <person name="Saville B.J."/>
            <person name="Banuett F."/>
            <person name="Kronstad J.W."/>
            <person name="Gold S.E."/>
            <person name="Mueller O."/>
            <person name="Perlin M.H."/>
            <person name="Woesten H.A.B."/>
            <person name="de Vries R."/>
            <person name="Ruiz-Herrera J."/>
            <person name="Reynaga-Pena C.G."/>
            <person name="Snetselaar K."/>
            <person name="McCann M."/>
            <person name="Perez-Martin J."/>
            <person name="Feldbruegge M."/>
            <person name="Basse C.W."/>
            <person name="Steinberg G."/>
            <person name="Ibeas J.I."/>
            <person name="Holloman W."/>
            <person name="Guzman P."/>
            <person name="Farman M.L."/>
            <person name="Stajich J.E."/>
            <person name="Sentandreu R."/>
            <person name="Gonzalez-Prieto J.M."/>
            <person name="Kennell J.C."/>
            <person name="Molina L."/>
            <person name="Schirawski J."/>
            <person name="Mendoza-Mendoza A."/>
            <person name="Greilinger D."/>
            <person name="Muench K."/>
            <person name="Roessel N."/>
            <person name="Scherer M."/>
            <person name="Vranes M."/>
            <person name="Ladendorf O."/>
            <person name="Vincon V."/>
            <person name="Fuchs U."/>
            <person name="Sandrock B."/>
            <person name="Meng S."/>
            <person name="Ho E.C.H."/>
            <person name="Cahill M.J."/>
            <person name="Boyce K.J."/>
            <person name="Klose J."/>
            <person name="Klosterman S.J."/>
            <person name="Deelstra H.J."/>
            <person name="Ortiz-Castellanos L."/>
            <person name="Li W."/>
            <person name="Sanchez-Alonso P."/>
            <person name="Schreier P.H."/>
            <person name="Haeuser-Hahn I."/>
            <person name="Vaupel M."/>
            <person name="Koopmann E."/>
            <person name="Friedrich G."/>
            <person name="Voss H."/>
            <person name="Schlueter T."/>
            <person name="Margolis J."/>
            <person name="Platt D."/>
            <person name="Swimmer C."/>
            <person name="Gnirke A."/>
            <person name="Chen F."/>
            <person name="Vysotskaia V."/>
            <person name="Mannhaupt G."/>
            <person name="Gueldener U."/>
            <person name="Muensterkoetter M."/>
            <person name="Haase D."/>
            <person name="Oesterheld M."/>
            <person name="Mewes H.-W."/>
            <person name="Mauceli E.W."/>
            <person name="DeCaprio D."/>
            <person name="Wade C.M."/>
            <person name="Butler J."/>
            <person name="Young S.K."/>
            <person name="Jaffe D.B."/>
            <person name="Calvo S.E."/>
            <person name="Nusbaum C."/>
            <person name="Galagan J.E."/>
            <person name="Birren B.W."/>
        </authorList>
    </citation>
    <scope>NUCLEOTIDE SEQUENCE [LARGE SCALE GENOMIC DNA]</scope>
    <source>
        <strain>DSM 14603 / FGSC 9021 / UM521</strain>
    </source>
</reference>
<reference key="2">
    <citation type="submission" date="2014-09" db="EMBL/GenBank/DDBJ databases">
        <authorList>
            <person name="Gueldener U."/>
            <person name="Muensterkoetter M."/>
            <person name="Walter M.C."/>
            <person name="Mannhaupt G."/>
            <person name="Kahmann R."/>
        </authorList>
    </citation>
    <scope>GENOME REANNOTATION</scope>
    <source>
        <strain>DSM 14603 / FGSC 9021 / UM521</strain>
    </source>
</reference>
<accession>Q4PAB8</accession>
<accession>A0A0D1E345</accession>